<keyword id="KW-0067">ATP-binding</keyword>
<keyword id="KW-0436">Ligase</keyword>
<keyword id="KW-0460">Magnesium</keyword>
<keyword id="KW-0464">Manganese</keyword>
<keyword id="KW-0479">Metal-binding</keyword>
<keyword id="KW-0547">Nucleotide-binding</keyword>
<keyword id="KW-0648">Protein biosynthesis</keyword>
<organism>
    <name type="scientific">Sodalis glossinidius (strain morsitans)</name>
    <dbReference type="NCBI Taxonomy" id="343509"/>
    <lineage>
        <taxon>Bacteria</taxon>
        <taxon>Pseudomonadati</taxon>
        <taxon>Pseudomonadota</taxon>
        <taxon>Gammaproteobacteria</taxon>
        <taxon>Enterobacterales</taxon>
        <taxon>Bruguierivoracaceae</taxon>
        <taxon>Sodalis</taxon>
    </lineage>
</organism>
<accession>Q2NUH6</accession>
<gene>
    <name evidence="1" type="primary">rimK</name>
    <name type="ordered locus">SG0924</name>
</gene>
<comment type="cofactor">
    <cofactor evidence="1">
        <name>Mg(2+)</name>
        <dbReference type="ChEBI" id="CHEBI:18420"/>
    </cofactor>
    <cofactor evidence="1">
        <name>Mn(2+)</name>
        <dbReference type="ChEBI" id="CHEBI:29035"/>
    </cofactor>
    <text evidence="1">Binds 2 magnesium or manganese ions per subunit.</text>
</comment>
<comment type="similarity">
    <text evidence="1">Belongs to the RimK family.</text>
</comment>
<name>RIMK_SODGM</name>
<reference key="1">
    <citation type="journal article" date="2006" name="Genome Res.">
        <title>Massive genome erosion and functional adaptations provide insights into the symbiotic lifestyle of Sodalis glossinidius in the tsetse host.</title>
        <authorList>
            <person name="Toh H."/>
            <person name="Weiss B.L."/>
            <person name="Perkin S.A.H."/>
            <person name="Yamashita A."/>
            <person name="Oshima K."/>
            <person name="Hattori M."/>
            <person name="Aksoy S."/>
        </authorList>
    </citation>
    <scope>NUCLEOTIDE SEQUENCE [LARGE SCALE GENOMIC DNA]</scope>
    <source>
        <strain>morsitans</strain>
    </source>
</reference>
<evidence type="ECO:0000255" key="1">
    <source>
        <dbReference type="HAMAP-Rule" id="MF_01552"/>
    </source>
</evidence>
<feature type="chain" id="PRO_1000068860" description="Probable alpha-L-glutamate ligase">
    <location>
        <begin position="1"/>
        <end position="296"/>
    </location>
</feature>
<feature type="domain" description="ATP-grasp" evidence="1">
    <location>
        <begin position="104"/>
        <end position="287"/>
    </location>
</feature>
<feature type="binding site" evidence="1">
    <location>
        <position position="141"/>
    </location>
    <ligand>
        <name>ATP</name>
        <dbReference type="ChEBI" id="CHEBI:30616"/>
    </ligand>
</feature>
<feature type="binding site" evidence="1">
    <location>
        <begin position="178"/>
        <end position="179"/>
    </location>
    <ligand>
        <name>ATP</name>
        <dbReference type="ChEBI" id="CHEBI:30616"/>
    </ligand>
</feature>
<feature type="binding site" evidence="1">
    <location>
        <position position="187"/>
    </location>
    <ligand>
        <name>ATP</name>
        <dbReference type="ChEBI" id="CHEBI:30616"/>
    </ligand>
</feature>
<feature type="binding site" evidence="1">
    <location>
        <begin position="211"/>
        <end position="213"/>
    </location>
    <ligand>
        <name>ATP</name>
        <dbReference type="ChEBI" id="CHEBI:30616"/>
    </ligand>
</feature>
<feature type="binding site" evidence="1">
    <location>
        <position position="248"/>
    </location>
    <ligand>
        <name>Mg(2+)</name>
        <dbReference type="ChEBI" id="CHEBI:18420"/>
        <label>1</label>
    </ligand>
</feature>
<feature type="binding site" evidence="1">
    <location>
        <position position="248"/>
    </location>
    <ligand>
        <name>Mn(2+)</name>
        <dbReference type="ChEBI" id="CHEBI:29035"/>
        <label>1</label>
    </ligand>
</feature>
<feature type="binding site" evidence="1">
    <location>
        <position position="260"/>
    </location>
    <ligand>
        <name>Mg(2+)</name>
        <dbReference type="ChEBI" id="CHEBI:18420"/>
        <label>1</label>
    </ligand>
</feature>
<feature type="binding site" evidence="1">
    <location>
        <position position="260"/>
    </location>
    <ligand>
        <name>Mg(2+)</name>
        <dbReference type="ChEBI" id="CHEBI:18420"/>
        <label>2</label>
    </ligand>
</feature>
<feature type="binding site" evidence="1">
    <location>
        <position position="260"/>
    </location>
    <ligand>
        <name>Mn(2+)</name>
        <dbReference type="ChEBI" id="CHEBI:29035"/>
        <label>1</label>
    </ligand>
</feature>
<feature type="binding site" evidence="1">
    <location>
        <position position="260"/>
    </location>
    <ligand>
        <name>Mn(2+)</name>
        <dbReference type="ChEBI" id="CHEBI:29035"/>
        <label>2</label>
    </ligand>
</feature>
<feature type="binding site" evidence="1">
    <location>
        <position position="262"/>
    </location>
    <ligand>
        <name>Mg(2+)</name>
        <dbReference type="ChEBI" id="CHEBI:18420"/>
        <label>2</label>
    </ligand>
</feature>
<feature type="binding site" evidence="1">
    <location>
        <position position="262"/>
    </location>
    <ligand>
        <name>Mn(2+)</name>
        <dbReference type="ChEBI" id="CHEBI:29035"/>
        <label>2</label>
    </ligand>
</feature>
<proteinExistence type="inferred from homology"/>
<sequence>MKLAILSRDGTLFSCRRLREAAQARGHKVDVIDPLSCYMNINSAAPSIHYRGRRLKHYDAVIPRIGPLTTFYGTAVLRQFEMLGSYALNESAAITRARDKLHSLQLLARQGIDLPITGFADSPDDTGDLITMVGGAPLVVKLVEGTQGIGVVLAETRQAAESVIDAFRGLKAQFLVQEFVAEAGGRDVRCLVIGDKVVAVIERHAKEGDFRSNLHRGGSARAVTISAAERAVAIHAAAALGLNVAGVDILRAKRGPLVMEVNASPGLEGIEAASDMDIATLMITFIEARLADRSSR</sequence>
<dbReference type="EC" id="6.3.2.-" evidence="1"/>
<dbReference type="EMBL" id="AP008232">
    <property type="protein sequence ID" value="BAE74199.1"/>
    <property type="molecule type" value="Genomic_DNA"/>
</dbReference>
<dbReference type="RefSeq" id="WP_011410785.1">
    <property type="nucleotide sequence ID" value="NC_007712.1"/>
</dbReference>
<dbReference type="SMR" id="Q2NUH6"/>
<dbReference type="STRING" id="343509.SG0924"/>
<dbReference type="KEGG" id="sgl:SG0924"/>
<dbReference type="eggNOG" id="COG0189">
    <property type="taxonomic scope" value="Bacteria"/>
</dbReference>
<dbReference type="HOGENOM" id="CLU_054353_0_1_6"/>
<dbReference type="OrthoDB" id="3865600at2"/>
<dbReference type="BioCyc" id="SGLO343509:SGP1_RS07905-MONOMER"/>
<dbReference type="Proteomes" id="UP000001932">
    <property type="component" value="Chromosome"/>
</dbReference>
<dbReference type="GO" id="GO:0005737">
    <property type="term" value="C:cytoplasm"/>
    <property type="evidence" value="ECO:0007669"/>
    <property type="project" value="TreeGrafter"/>
</dbReference>
<dbReference type="GO" id="GO:0005524">
    <property type="term" value="F:ATP binding"/>
    <property type="evidence" value="ECO:0007669"/>
    <property type="project" value="UniProtKB-UniRule"/>
</dbReference>
<dbReference type="GO" id="GO:0046872">
    <property type="term" value="F:metal ion binding"/>
    <property type="evidence" value="ECO:0007669"/>
    <property type="project" value="UniProtKB-KW"/>
</dbReference>
<dbReference type="GO" id="GO:0018169">
    <property type="term" value="F:ribosomal S6-glutamic acid ligase activity"/>
    <property type="evidence" value="ECO:0007669"/>
    <property type="project" value="TreeGrafter"/>
</dbReference>
<dbReference type="GO" id="GO:0036211">
    <property type="term" value="P:protein modification process"/>
    <property type="evidence" value="ECO:0007669"/>
    <property type="project" value="InterPro"/>
</dbReference>
<dbReference type="GO" id="GO:0009432">
    <property type="term" value="P:SOS response"/>
    <property type="evidence" value="ECO:0007669"/>
    <property type="project" value="TreeGrafter"/>
</dbReference>
<dbReference type="GO" id="GO:0006412">
    <property type="term" value="P:translation"/>
    <property type="evidence" value="ECO:0007669"/>
    <property type="project" value="UniProtKB-KW"/>
</dbReference>
<dbReference type="FunFam" id="3.40.50.20:FF:000004">
    <property type="entry name" value="Probable alpha-L-glutamate ligase"/>
    <property type="match status" value="1"/>
</dbReference>
<dbReference type="FunFam" id="3.30.1490.20:FF:000005">
    <property type="entry name" value="Probable alpha-L-glutamate ligase 1"/>
    <property type="match status" value="1"/>
</dbReference>
<dbReference type="Gene3D" id="3.40.50.20">
    <property type="match status" value="1"/>
</dbReference>
<dbReference type="Gene3D" id="3.30.1490.20">
    <property type="entry name" value="ATP-grasp fold, A domain"/>
    <property type="match status" value="1"/>
</dbReference>
<dbReference type="Gene3D" id="3.30.470.20">
    <property type="entry name" value="ATP-grasp fold, B domain"/>
    <property type="match status" value="1"/>
</dbReference>
<dbReference type="HAMAP" id="MF_01552">
    <property type="entry name" value="RimK"/>
    <property type="match status" value="1"/>
</dbReference>
<dbReference type="InterPro" id="IPR011761">
    <property type="entry name" value="ATP-grasp"/>
</dbReference>
<dbReference type="InterPro" id="IPR013651">
    <property type="entry name" value="ATP-grasp_RimK-type"/>
</dbReference>
<dbReference type="InterPro" id="IPR013815">
    <property type="entry name" value="ATP_grasp_subdomain_1"/>
</dbReference>
<dbReference type="InterPro" id="IPR023533">
    <property type="entry name" value="RimK"/>
</dbReference>
<dbReference type="InterPro" id="IPR041107">
    <property type="entry name" value="Rimk_N"/>
</dbReference>
<dbReference type="InterPro" id="IPR004666">
    <property type="entry name" value="Rp_bS6_RimK/Lys_biosynth_LsyX"/>
</dbReference>
<dbReference type="NCBIfam" id="NF007764">
    <property type="entry name" value="PRK10446.1"/>
    <property type="match status" value="1"/>
</dbReference>
<dbReference type="NCBIfam" id="TIGR00768">
    <property type="entry name" value="rimK_fam"/>
    <property type="match status" value="1"/>
</dbReference>
<dbReference type="PANTHER" id="PTHR21621:SF7">
    <property type="entry name" value="RIBOSOMAL PROTEIN BS6--L-GLUTAMATE LIGASE"/>
    <property type="match status" value="1"/>
</dbReference>
<dbReference type="PANTHER" id="PTHR21621">
    <property type="entry name" value="RIBOSOMAL PROTEIN S6 MODIFICATION PROTEIN"/>
    <property type="match status" value="1"/>
</dbReference>
<dbReference type="Pfam" id="PF08443">
    <property type="entry name" value="RimK"/>
    <property type="match status" value="1"/>
</dbReference>
<dbReference type="Pfam" id="PF18030">
    <property type="entry name" value="Rimk_N"/>
    <property type="match status" value="1"/>
</dbReference>
<dbReference type="SUPFAM" id="SSF56059">
    <property type="entry name" value="Glutathione synthetase ATP-binding domain-like"/>
    <property type="match status" value="1"/>
</dbReference>
<dbReference type="PROSITE" id="PS50975">
    <property type="entry name" value="ATP_GRASP"/>
    <property type="match status" value="1"/>
</dbReference>
<protein>
    <recommendedName>
        <fullName evidence="1">Probable alpha-L-glutamate ligase</fullName>
        <ecNumber evidence="1">6.3.2.-</ecNumber>
    </recommendedName>
</protein>